<accession>A9IR25</accession>
<name>LEXA_BORPD</name>
<protein>
    <recommendedName>
        <fullName evidence="1">LexA repressor</fullName>
        <ecNumber evidence="1">3.4.21.88</ecNumber>
    </recommendedName>
</protein>
<gene>
    <name evidence="1" type="primary">lexA</name>
    <name type="ordered locus">Bpet2782</name>
</gene>
<feature type="chain" id="PRO_1000089548" description="LexA repressor">
    <location>
        <begin position="1"/>
        <end position="224"/>
    </location>
</feature>
<feature type="DNA-binding region" description="H-T-H motif" evidence="1">
    <location>
        <begin position="29"/>
        <end position="49"/>
    </location>
</feature>
<feature type="active site" description="For autocatalytic cleavage activity" evidence="1">
    <location>
        <position position="142"/>
    </location>
</feature>
<feature type="active site" description="For autocatalytic cleavage activity" evidence="1">
    <location>
        <position position="179"/>
    </location>
</feature>
<feature type="site" description="Cleavage; by autolysis" evidence="1">
    <location>
        <begin position="107"/>
        <end position="108"/>
    </location>
</feature>
<evidence type="ECO:0000255" key="1">
    <source>
        <dbReference type="HAMAP-Rule" id="MF_00015"/>
    </source>
</evidence>
<organism>
    <name type="scientific">Bordetella petrii (strain ATCC BAA-461 / DSM 12804 / CCUG 43448)</name>
    <dbReference type="NCBI Taxonomy" id="340100"/>
    <lineage>
        <taxon>Bacteria</taxon>
        <taxon>Pseudomonadati</taxon>
        <taxon>Pseudomonadota</taxon>
        <taxon>Betaproteobacteria</taxon>
        <taxon>Burkholderiales</taxon>
        <taxon>Alcaligenaceae</taxon>
        <taxon>Bordetella</taxon>
    </lineage>
</organism>
<dbReference type="EC" id="3.4.21.88" evidence="1"/>
<dbReference type="EMBL" id="AM902716">
    <property type="protein sequence ID" value="CAP43124.1"/>
    <property type="molecule type" value="Genomic_DNA"/>
</dbReference>
<dbReference type="SMR" id="A9IR25"/>
<dbReference type="STRING" id="94624.Bpet2782"/>
<dbReference type="MEROPS" id="S24.001"/>
<dbReference type="KEGG" id="bpt:Bpet2782"/>
<dbReference type="eggNOG" id="COG1974">
    <property type="taxonomic scope" value="Bacteria"/>
</dbReference>
<dbReference type="Proteomes" id="UP000001225">
    <property type="component" value="Chromosome"/>
</dbReference>
<dbReference type="GO" id="GO:0003677">
    <property type="term" value="F:DNA binding"/>
    <property type="evidence" value="ECO:0007669"/>
    <property type="project" value="UniProtKB-UniRule"/>
</dbReference>
<dbReference type="GO" id="GO:0004252">
    <property type="term" value="F:serine-type endopeptidase activity"/>
    <property type="evidence" value="ECO:0007669"/>
    <property type="project" value="UniProtKB-UniRule"/>
</dbReference>
<dbReference type="GO" id="GO:0006281">
    <property type="term" value="P:DNA repair"/>
    <property type="evidence" value="ECO:0007669"/>
    <property type="project" value="UniProtKB-UniRule"/>
</dbReference>
<dbReference type="GO" id="GO:0006260">
    <property type="term" value="P:DNA replication"/>
    <property type="evidence" value="ECO:0007669"/>
    <property type="project" value="UniProtKB-UniRule"/>
</dbReference>
<dbReference type="GO" id="GO:0045892">
    <property type="term" value="P:negative regulation of DNA-templated transcription"/>
    <property type="evidence" value="ECO:0007669"/>
    <property type="project" value="UniProtKB-UniRule"/>
</dbReference>
<dbReference type="GO" id="GO:0006508">
    <property type="term" value="P:proteolysis"/>
    <property type="evidence" value="ECO:0007669"/>
    <property type="project" value="InterPro"/>
</dbReference>
<dbReference type="GO" id="GO:0009432">
    <property type="term" value="P:SOS response"/>
    <property type="evidence" value="ECO:0007669"/>
    <property type="project" value="UniProtKB-UniRule"/>
</dbReference>
<dbReference type="CDD" id="cd06529">
    <property type="entry name" value="S24_LexA-like"/>
    <property type="match status" value="1"/>
</dbReference>
<dbReference type="FunFam" id="1.10.10.10:FF:000009">
    <property type="entry name" value="LexA repressor"/>
    <property type="match status" value="1"/>
</dbReference>
<dbReference type="FunFam" id="2.10.109.10:FF:000001">
    <property type="entry name" value="LexA repressor"/>
    <property type="match status" value="1"/>
</dbReference>
<dbReference type="Gene3D" id="2.10.109.10">
    <property type="entry name" value="Umud Fragment, subunit A"/>
    <property type="match status" value="1"/>
</dbReference>
<dbReference type="Gene3D" id="1.10.10.10">
    <property type="entry name" value="Winged helix-like DNA-binding domain superfamily/Winged helix DNA-binding domain"/>
    <property type="match status" value="1"/>
</dbReference>
<dbReference type="HAMAP" id="MF_00015">
    <property type="entry name" value="LexA"/>
    <property type="match status" value="1"/>
</dbReference>
<dbReference type="InterPro" id="IPR006200">
    <property type="entry name" value="LexA"/>
</dbReference>
<dbReference type="InterPro" id="IPR039418">
    <property type="entry name" value="LexA-like"/>
</dbReference>
<dbReference type="InterPro" id="IPR036286">
    <property type="entry name" value="LexA/Signal_pep-like_sf"/>
</dbReference>
<dbReference type="InterPro" id="IPR006199">
    <property type="entry name" value="LexA_DNA-bd_dom"/>
</dbReference>
<dbReference type="InterPro" id="IPR050077">
    <property type="entry name" value="LexA_repressor"/>
</dbReference>
<dbReference type="InterPro" id="IPR006197">
    <property type="entry name" value="Peptidase_S24_LexA"/>
</dbReference>
<dbReference type="InterPro" id="IPR015927">
    <property type="entry name" value="Peptidase_S24_S26A/B/C"/>
</dbReference>
<dbReference type="InterPro" id="IPR036388">
    <property type="entry name" value="WH-like_DNA-bd_sf"/>
</dbReference>
<dbReference type="InterPro" id="IPR036390">
    <property type="entry name" value="WH_DNA-bd_sf"/>
</dbReference>
<dbReference type="NCBIfam" id="TIGR00498">
    <property type="entry name" value="lexA"/>
    <property type="match status" value="1"/>
</dbReference>
<dbReference type="PANTHER" id="PTHR33516">
    <property type="entry name" value="LEXA REPRESSOR"/>
    <property type="match status" value="1"/>
</dbReference>
<dbReference type="PANTHER" id="PTHR33516:SF2">
    <property type="entry name" value="LEXA REPRESSOR-RELATED"/>
    <property type="match status" value="1"/>
</dbReference>
<dbReference type="Pfam" id="PF01726">
    <property type="entry name" value="LexA_DNA_bind"/>
    <property type="match status" value="1"/>
</dbReference>
<dbReference type="Pfam" id="PF00717">
    <property type="entry name" value="Peptidase_S24"/>
    <property type="match status" value="1"/>
</dbReference>
<dbReference type="PRINTS" id="PR00726">
    <property type="entry name" value="LEXASERPTASE"/>
</dbReference>
<dbReference type="SUPFAM" id="SSF51306">
    <property type="entry name" value="LexA/Signal peptidase"/>
    <property type="match status" value="1"/>
</dbReference>
<dbReference type="SUPFAM" id="SSF46785">
    <property type="entry name" value="Winged helix' DNA-binding domain"/>
    <property type="match status" value="1"/>
</dbReference>
<sequence length="224" mass="23869">MASKLTDRQQEILDLIRLTVSRTGFPPTRAEIARALGFRSPNAAEDHLKALARKGAIELTAGASRGIRLKDAGETIPPGPETAASALAGMADAVGRLLLPLVGRVAAGSPILAAEHVEREVGVDVDLFAQTPDYLLKVRGMSMRDAGILEGDLLAVKRAAEARNGQIVVARLGDEVTVKRLQRHQGRIELLPENPDFSPIVVDGTQEFALEGIAVGLIRTQALH</sequence>
<comment type="function">
    <text evidence="1">Represses a number of genes involved in the response to DNA damage (SOS response), including recA and lexA. In the presence of single-stranded DNA, RecA interacts with LexA causing an autocatalytic cleavage which disrupts the DNA-binding part of LexA, leading to derepression of the SOS regulon and eventually DNA repair.</text>
</comment>
<comment type="catalytic activity">
    <reaction evidence="1">
        <text>Hydrolysis of Ala-|-Gly bond in repressor LexA.</text>
        <dbReference type="EC" id="3.4.21.88"/>
    </reaction>
</comment>
<comment type="subunit">
    <text evidence="1">Homodimer.</text>
</comment>
<comment type="similarity">
    <text evidence="1">Belongs to the peptidase S24 family.</text>
</comment>
<proteinExistence type="inferred from homology"/>
<reference key="1">
    <citation type="journal article" date="2008" name="BMC Genomics">
        <title>The missing link: Bordetella petrii is endowed with both the metabolic versatility of environmental bacteria and virulence traits of pathogenic Bordetellae.</title>
        <authorList>
            <person name="Gross R."/>
            <person name="Guzman C.A."/>
            <person name="Sebaihia M."/>
            <person name="Martin dos Santos V.A.P."/>
            <person name="Pieper D.H."/>
            <person name="Koebnik R."/>
            <person name="Lechner M."/>
            <person name="Bartels D."/>
            <person name="Buhrmester J."/>
            <person name="Choudhuri J.V."/>
            <person name="Ebensen T."/>
            <person name="Gaigalat L."/>
            <person name="Herrmann S."/>
            <person name="Khachane A.N."/>
            <person name="Larisch C."/>
            <person name="Link S."/>
            <person name="Linke B."/>
            <person name="Meyer F."/>
            <person name="Mormann S."/>
            <person name="Nakunst D."/>
            <person name="Rueckert C."/>
            <person name="Schneiker-Bekel S."/>
            <person name="Schulze K."/>
            <person name="Voerholter F.-J."/>
            <person name="Yevsa T."/>
            <person name="Engle J.T."/>
            <person name="Goldman W.E."/>
            <person name="Puehler A."/>
            <person name="Goebel U.B."/>
            <person name="Goesmann A."/>
            <person name="Bloecker H."/>
            <person name="Kaiser O."/>
            <person name="Martinez-Arias R."/>
        </authorList>
    </citation>
    <scope>NUCLEOTIDE SEQUENCE [LARGE SCALE GENOMIC DNA]</scope>
    <source>
        <strain>ATCC BAA-461 / DSM 12804 / CCUG 43448</strain>
    </source>
</reference>
<keyword id="KW-0068">Autocatalytic cleavage</keyword>
<keyword id="KW-0227">DNA damage</keyword>
<keyword id="KW-0234">DNA repair</keyword>
<keyword id="KW-0235">DNA replication</keyword>
<keyword id="KW-0238">DNA-binding</keyword>
<keyword id="KW-0378">Hydrolase</keyword>
<keyword id="KW-0678">Repressor</keyword>
<keyword id="KW-0742">SOS response</keyword>
<keyword id="KW-0804">Transcription</keyword>
<keyword id="KW-0805">Transcription regulation</keyword>